<feature type="chain" id="PRO_0000409324" description="Vacuolar membrane protein FOSTERSB_4073">
    <location>
        <begin position="1"/>
        <end position="314"/>
    </location>
</feature>
<feature type="transmembrane region" description="Helical" evidence="3">
    <location>
        <begin position="93"/>
        <end position="113"/>
    </location>
</feature>
<feature type="region of interest" description="Disordered" evidence="4">
    <location>
        <begin position="32"/>
        <end position="60"/>
    </location>
</feature>
<feature type="region of interest" description="Disordered" evidence="4">
    <location>
        <begin position="240"/>
        <end position="309"/>
    </location>
</feature>
<feature type="compositionally biased region" description="Basic and acidic residues" evidence="4">
    <location>
        <begin position="254"/>
        <end position="269"/>
    </location>
</feature>
<feature type="modified residue" description="Phosphoserine" evidence="2">
    <location>
        <position position="148"/>
    </location>
</feature>
<feature type="modified residue" description="Phosphoserine" evidence="2">
    <location>
        <position position="254"/>
    </location>
</feature>
<feature type="modified residue" description="Phosphoserine" evidence="2">
    <location>
        <position position="274"/>
    </location>
</feature>
<name>YNF8_YEASB</name>
<sequence length="314" mass="34752">MVKKNFIPSVSLVRRDLPTLVTTTTSSTALSKPTSSVVSETSSKSLPSLTSSAFSTSSGATSSSSLIVASITPPSTAGNPFILNAADKPNGTVYIAVGAVIGAIFISILIWWLVSXYLSRRFTMTNSYANDSKNLYRGHHKHSSSLQSNPFDINDEKSYMQDDWDSMSQLESSQYEDAASPFNPIQDPFTDNRRSLFISPTLQVSQYEKSHSRHQSKDTNIFIDDPSLYVGTYLEEEEEEERKLNLNRPQRAASPERKEKKINSMEGYHKRNQSSLGLIPVASATSNTSSPKKAHKRQAPSMFLDDVLNGREII</sequence>
<comment type="subcellular location">
    <subcellularLocation>
        <location evidence="1">Vacuole membrane</location>
        <topology evidence="1">Single-pass membrane protein</topology>
    </subcellularLocation>
</comment>
<comment type="similarity">
    <text evidence="5">Belongs to the PRM5 family.</text>
</comment>
<gene>
    <name type="ORF">FOSTERSB_4073</name>
</gene>
<organism>
    <name type="scientific">Saccharomyces cerevisiae (strain FostersB)</name>
    <name type="common">Baker's yeast</name>
    <dbReference type="NCBI Taxonomy" id="764102"/>
    <lineage>
        <taxon>Eukaryota</taxon>
        <taxon>Fungi</taxon>
        <taxon>Dikarya</taxon>
        <taxon>Ascomycota</taxon>
        <taxon>Saccharomycotina</taxon>
        <taxon>Saccharomycetes</taxon>
        <taxon>Saccharomycetales</taxon>
        <taxon>Saccharomycetaceae</taxon>
        <taxon>Saccharomyces</taxon>
    </lineage>
</organism>
<protein>
    <recommendedName>
        <fullName>Vacuolar membrane protein FOSTERSB_4073</fullName>
    </recommendedName>
</protein>
<dbReference type="EMBL" id="AEHH01000067">
    <property type="protein sequence ID" value="EGA57050.1"/>
    <property type="molecule type" value="Genomic_DNA"/>
</dbReference>
<dbReference type="HOGENOM" id="CLU_061224_0_0_1"/>
<dbReference type="OrthoDB" id="4065319at2759"/>
<dbReference type="GO" id="GO:0005935">
    <property type="term" value="C:cellular bud neck"/>
    <property type="evidence" value="ECO:0007669"/>
    <property type="project" value="TreeGrafter"/>
</dbReference>
<dbReference type="GO" id="GO:0000324">
    <property type="term" value="C:fungal-type vacuole"/>
    <property type="evidence" value="ECO:0007669"/>
    <property type="project" value="TreeGrafter"/>
</dbReference>
<dbReference type="GO" id="GO:0005774">
    <property type="term" value="C:vacuolar membrane"/>
    <property type="evidence" value="ECO:0007669"/>
    <property type="project" value="UniProtKB-SubCell"/>
</dbReference>
<dbReference type="InterPro" id="IPR051009">
    <property type="entry name" value="PRM"/>
</dbReference>
<dbReference type="PANTHER" id="PTHR36089">
    <property type="entry name" value="CHITIN SYNTHASE 3 COMPLEX PROTEIN CSI2-RELATED"/>
    <property type="match status" value="1"/>
</dbReference>
<dbReference type="PANTHER" id="PTHR36089:SF1">
    <property type="entry name" value="CHITIN SYNTHASE 3 COMPLEX PROTEIN CSI2-RELATED"/>
    <property type="match status" value="1"/>
</dbReference>
<proteinExistence type="inferred from homology"/>
<accession>E7Q8M6</accession>
<reference key="1">
    <citation type="journal article" date="2011" name="PLoS Genet.">
        <title>Whole-genome comparison reveals novel genetic elements that characterize the genome of industrial strains of Saccharomyces cerevisiae.</title>
        <authorList>
            <person name="Borneman A.R."/>
            <person name="Desany B.A."/>
            <person name="Riches D."/>
            <person name="Affourtit J.P."/>
            <person name="Forgan A.H."/>
            <person name="Pretorius I.S."/>
            <person name="Egholm M."/>
            <person name="Chambers P.J."/>
        </authorList>
    </citation>
    <scope>NUCLEOTIDE SEQUENCE [LARGE SCALE GENOMIC DNA]</scope>
    <source>
        <strain>FostersB</strain>
    </source>
</reference>
<evidence type="ECO:0000250" key="1"/>
<evidence type="ECO:0000250" key="2">
    <source>
        <dbReference type="UniProtKB" id="P53947"/>
    </source>
</evidence>
<evidence type="ECO:0000255" key="3"/>
<evidence type="ECO:0000256" key="4">
    <source>
        <dbReference type="SAM" id="MobiDB-lite"/>
    </source>
</evidence>
<evidence type="ECO:0000305" key="5"/>
<keyword id="KW-0472">Membrane</keyword>
<keyword id="KW-0597">Phosphoprotein</keyword>
<keyword id="KW-0812">Transmembrane</keyword>
<keyword id="KW-1133">Transmembrane helix</keyword>
<keyword id="KW-0926">Vacuole</keyword>